<reference key="1">
    <citation type="journal article" date="2004" name="Science">
        <title>Dendrite development regulated by CREST, a calcium-regulated transcriptional activator.</title>
        <authorList>
            <person name="Aizawa H."/>
            <person name="Hu S.-C."/>
            <person name="Bobb K."/>
            <person name="Balakrishnan K."/>
            <person name="Ince G."/>
            <person name="Gurevich I."/>
            <person name="Cowan M."/>
            <person name="Ghosh A."/>
        </authorList>
    </citation>
    <scope>NUCLEOTIDE SEQUENCE [MRNA]</scope>
    <scope>FUNCTION</scope>
    <scope>SUBCELLULAR LOCATION</scope>
    <scope>INTERACTION WITH CREBBP AND EP300</scope>
    <scope>TISSUE SPECIFICITY</scope>
    <scope>DEVELOPMENTAL STAGE</scope>
    <source>
        <strain>Sprague-Dawley</strain>
        <tissue>Brain</tissue>
    </source>
</reference>
<reference key="2">
    <citation type="journal article" date="2004" name="Neurosci. Lett.">
        <title>The calcium-responsive transactivator recruits CREB binding protein to nuclear bodies.</title>
        <authorList>
            <person name="Pradhan A."/>
            <person name="Liu Y."/>
        </authorList>
    </citation>
    <scope>SUBCELLULAR LOCATION</scope>
</reference>
<reference key="3">
    <citation type="journal article" date="2005" name="J. Biol. Chem.">
        <title>A multifunctional domain of the calcium-responsive transactivator (CREST) that inhibits dendritic growth in cultured neurons.</title>
        <authorList>
            <person name="Pradhan A."/>
            <person name="Liu Y."/>
        </authorList>
    </citation>
    <scope>FUNCTION</scope>
    <scope>SUBUNIT</scope>
    <scope>SUBCELLULAR LOCATION</scope>
    <scope>MFD DOMAIN</scope>
</reference>
<reference key="4">
    <citation type="journal article" date="2008" name="Neuron">
        <title>A calcium-dependent switch in a CREST-BRG1 complex regulates activity-dependent gene expression.</title>
        <authorList>
            <person name="Qiu Z."/>
            <person name="Ghosh A."/>
        </authorList>
    </citation>
    <scope>FUNCTION</scope>
    <scope>INTERACTION WITH SMARCA4/BRG1</scope>
</reference>
<name>CREST_RAT</name>
<protein>
    <recommendedName>
        <fullName>Calcium-responsive transcription coactivator</fullName>
    </recommendedName>
    <alternativeName>
        <fullName>SS18-like protein 1</fullName>
    </alternativeName>
</protein>
<proteinExistence type="evidence at protein level"/>
<dbReference type="EMBL" id="AY034073">
    <property type="protein sequence ID" value="AAK53461.1"/>
    <property type="molecule type" value="mRNA"/>
</dbReference>
<dbReference type="RefSeq" id="NP_620273.1">
    <property type="nucleotide sequence ID" value="NM_138918.1"/>
</dbReference>
<dbReference type="SMR" id="Q91XJ0"/>
<dbReference type="FunCoup" id="Q91XJ0">
    <property type="interactions" value="2481"/>
</dbReference>
<dbReference type="STRING" id="10116.ENSRNOP00000072296"/>
<dbReference type="PhosphoSitePlus" id="Q91XJ0"/>
<dbReference type="PaxDb" id="10116-ENSRNOP00000011306"/>
<dbReference type="GeneID" id="192352"/>
<dbReference type="KEGG" id="rno:192352"/>
<dbReference type="AGR" id="RGD:621847"/>
<dbReference type="CTD" id="26039"/>
<dbReference type="RGD" id="621847">
    <property type="gene designation" value="Ss18l1"/>
</dbReference>
<dbReference type="VEuPathDB" id="HostDB:ENSRNOG00000060010"/>
<dbReference type="eggNOG" id="KOG3227">
    <property type="taxonomic scope" value="Eukaryota"/>
</dbReference>
<dbReference type="HOGENOM" id="CLU_054580_1_0_1"/>
<dbReference type="InParanoid" id="Q91XJ0"/>
<dbReference type="PRO" id="PR:Q91XJ0"/>
<dbReference type="Proteomes" id="UP000002494">
    <property type="component" value="Chromosome 3"/>
</dbReference>
<dbReference type="Bgee" id="ENSRNOG00000060010">
    <property type="expression patterns" value="Expressed in frontal cortex and 18 other cell types or tissues"/>
</dbReference>
<dbReference type="GO" id="GO:0000779">
    <property type="term" value="C:condensed chromosome, centromeric region"/>
    <property type="evidence" value="ECO:0000266"/>
    <property type="project" value="RGD"/>
</dbReference>
<dbReference type="GO" id="GO:0000776">
    <property type="term" value="C:kinetochore"/>
    <property type="evidence" value="ECO:0000266"/>
    <property type="project" value="RGD"/>
</dbReference>
<dbReference type="GO" id="GO:0071565">
    <property type="term" value="C:nBAF complex"/>
    <property type="evidence" value="ECO:0000266"/>
    <property type="project" value="RGD"/>
</dbReference>
<dbReference type="GO" id="GO:0016604">
    <property type="term" value="C:nuclear body"/>
    <property type="evidence" value="ECO:0000314"/>
    <property type="project" value="UniProtKB"/>
</dbReference>
<dbReference type="GO" id="GO:0005634">
    <property type="term" value="C:nucleus"/>
    <property type="evidence" value="ECO:0000314"/>
    <property type="project" value="UniProtKB"/>
</dbReference>
<dbReference type="GO" id="GO:0003713">
    <property type="term" value="F:transcription coactivator activity"/>
    <property type="evidence" value="ECO:0000318"/>
    <property type="project" value="GO_Central"/>
</dbReference>
<dbReference type="GO" id="GO:0006325">
    <property type="term" value="P:chromatin organization"/>
    <property type="evidence" value="ECO:0007669"/>
    <property type="project" value="UniProtKB-KW"/>
</dbReference>
<dbReference type="GO" id="GO:0016358">
    <property type="term" value="P:dendrite development"/>
    <property type="evidence" value="ECO:0000266"/>
    <property type="project" value="RGD"/>
</dbReference>
<dbReference type="GO" id="GO:0050775">
    <property type="term" value="P:positive regulation of dendrite morphogenesis"/>
    <property type="evidence" value="ECO:0000266"/>
    <property type="project" value="RGD"/>
</dbReference>
<dbReference type="GO" id="GO:0045893">
    <property type="term" value="P:positive regulation of DNA-templated transcription"/>
    <property type="evidence" value="ECO:0000314"/>
    <property type="project" value="UniProtKB"/>
</dbReference>
<dbReference type="GO" id="GO:0045944">
    <property type="term" value="P:positive regulation of transcription by RNA polymerase II"/>
    <property type="evidence" value="ECO:0000318"/>
    <property type="project" value="GO_Central"/>
</dbReference>
<dbReference type="GO" id="GO:0050773">
    <property type="term" value="P:regulation of dendrite development"/>
    <property type="evidence" value="ECO:0000314"/>
    <property type="project" value="UniProtKB"/>
</dbReference>
<dbReference type="InterPro" id="IPR007726">
    <property type="entry name" value="SS18_N"/>
</dbReference>
<dbReference type="PANTHER" id="PTHR23107:SF21">
    <property type="entry name" value="CALCIUM-RESPONSIVE TRANSACTIVATOR"/>
    <property type="match status" value="1"/>
</dbReference>
<dbReference type="PANTHER" id="PTHR23107">
    <property type="entry name" value="SYNOVIAL SARCOMA ASSOCIATED SS18 PROTEIN"/>
    <property type="match status" value="1"/>
</dbReference>
<dbReference type="Pfam" id="PF05030">
    <property type="entry name" value="SSXT"/>
    <property type="match status" value="1"/>
</dbReference>
<comment type="function">
    <text evidence="4 6 7">Transcriptional activator which is required for calcium-dependent dendritic growth and branching in cortical neurons. Recruits CREB-binding protein (CREBBP) to nuclear bodies. Component of the CREST-BRG1 complex, a multiprotein complex that regulates promoter activation by orchestrating a calcium-dependent release of a repressor complex and a recruitment of an activator complex. In resting neurons, transcription of the c-FOS promoter is inhibited by BRG1-dependent recruitment of a phospho-RB1-HDAC1 repressor complex. Upon calcium influx, RB1 is dephosphorylated by calcineurin, which leads to release of the repressor complex. At the same time, there is increased recruitment of CREBBP to the promoter by a CREST-dependent mechanism, which leads to transcriptional activation. The CREST-BRG1 complex also binds to the NR2B promoter, and activity-dependent induction of NR2B expression involves a release of HDAC1 and recruitment of CREBBP.</text>
</comment>
<comment type="subunit">
    <text evidence="1 4 6 7">Homodimer. Dimerization may be necessary for its function in neuronal dendritic development. Interacts (via C-terminus) with CREBBP (via N-terminus), EP300 and SMARCA4/BRG1. Interacts with the nBAF complex (By similarity). Association with CREBBP facilitates transcription while the association with SMARCA4/BRG1 suppresses CREST-mediated transcription in resting neurons.</text>
</comment>
<comment type="subcellular location">
    <subcellularLocation>
        <location evidence="4 5 6">Nucleus</location>
    </subcellularLocation>
    <subcellularLocation>
        <location evidence="1">Chromosome</location>
        <location evidence="1">Centromere</location>
        <location evidence="1">Kinetochore</location>
    </subcellularLocation>
    <text evidence="1">Localizes to nuclear bodies. Colocalizes with SGO1 at kinetochore (By similarity).</text>
</comment>
<comment type="tissue specificity">
    <text evidence="4">Brain (at protein level). Also found in the heart, liver, kidney and testis.</text>
</comment>
<comment type="developmental stage">
    <text evidence="4">Detected as early as 18 dpc in the developing cerebral cortex, and expression reaches its peak at P1, declines after P10, and remains at a relatively low level throughout adulthood. At 18 dpc, expressed in the forebrain, midbrain, and hindbrain. Within the forebrain, it is expressed in postmitotic cells of the cortical plate. At this stage, it can also be detected in other structures of central and peripheral nervous systems, including the trigeminal ganglion, superior cervical ganglion, retina and olfactory epithelium. Expression in the cortex is high at birth and declines substantially by P20. At P7, expressed in all cortical layers, and in the hippocampus, expression is high in the cell body layers of all subdivisions. Within the brain, expression decreases through development but continues to be expressed at high levels in the olfactory bulb, hippocampus, and cerebellum into adulthood.</text>
</comment>
<comment type="domain">
    <text>The MFD (multi-functional domain) domain is involved in transcription transactivation, nuclear body targeting and dimerization. Inhibits dendritic growth in cultured neurons.</text>
</comment>
<comment type="similarity">
    <text evidence="8">Belongs to the SS18 family.</text>
</comment>
<organism>
    <name type="scientific">Rattus norvegicus</name>
    <name type="common">Rat</name>
    <dbReference type="NCBI Taxonomy" id="10116"/>
    <lineage>
        <taxon>Eukaryota</taxon>
        <taxon>Metazoa</taxon>
        <taxon>Chordata</taxon>
        <taxon>Craniata</taxon>
        <taxon>Vertebrata</taxon>
        <taxon>Euteleostomi</taxon>
        <taxon>Mammalia</taxon>
        <taxon>Eutheria</taxon>
        <taxon>Euarchontoglires</taxon>
        <taxon>Glires</taxon>
        <taxon>Rodentia</taxon>
        <taxon>Myomorpha</taxon>
        <taxon>Muroidea</taxon>
        <taxon>Muridae</taxon>
        <taxon>Murinae</taxon>
        <taxon>Rattus</taxon>
    </lineage>
</organism>
<accession>Q91XJ0</accession>
<gene>
    <name type="primary">Ss18l1</name>
    <name type="synonym">Crest</name>
</gene>
<sequence length="401" mass="43999">MSVAFASARPRGKGEVTQQTIQKMLDENHHLIQCILDYQSKGKTAECTQYQQILHRNLVYLATIADSNQNMQSLLPAPPTQNMNLGPGALSQSGSSQGLHPQGSLSDTVSTGLPPASLMQGQIGNGPNHVSMQQTAQSTLPTTSMSMSGSGHGTGPGYSHSGPTSQSVPMQGQGAISNYVSRTNINMQSNPVSMMHQQAARPTTTQRRVEASITRARRPLHDGPGWQGGSMMGQRPMAPYRPSQQGSSQQYLGQEEYYSEQYSHSQGSAEPMSQQYYPDGHSDYAYQQSSYTEQSYDRSFEDPTQHYYEGGNSQYSQQQAGYQQGTAQQQTYSQQQYPNQQSYPGQQQGYGPAQGAPSQYSGYQQGQGQQYGSYRTSQTGPSAQQQRPYGYEQGQYGNYQQ</sequence>
<evidence type="ECO:0000250" key="1"/>
<evidence type="ECO:0000255" key="2"/>
<evidence type="ECO:0000256" key="3">
    <source>
        <dbReference type="SAM" id="MobiDB-lite"/>
    </source>
</evidence>
<evidence type="ECO:0000269" key="4">
    <source>
    </source>
</evidence>
<evidence type="ECO:0000269" key="5">
    <source>
    </source>
</evidence>
<evidence type="ECO:0000269" key="6">
    <source>
    </source>
</evidence>
<evidence type="ECO:0000269" key="7">
    <source>
    </source>
</evidence>
<evidence type="ECO:0000305" key="8"/>
<feature type="chain" id="PRO_0000391347" description="Calcium-responsive transcription coactivator">
    <location>
        <begin position="1"/>
        <end position="401"/>
    </location>
</feature>
<feature type="region of interest" description="N-terminal auto-inhibitory domain; necessary for interaction with SMARCA4/BRG1">
    <location>
        <begin position="1"/>
        <end position="148"/>
    </location>
</feature>
<feature type="region of interest" description="Disordered" evidence="3">
    <location>
        <begin position="72"/>
        <end position="171"/>
    </location>
</feature>
<feature type="region of interest" description="Methionine-rich intra-molecular domain">
    <location>
        <begin position="149"/>
        <end position="237"/>
    </location>
</feature>
<feature type="region of interest" description="Disordered" evidence="3">
    <location>
        <begin position="214"/>
        <end position="401"/>
    </location>
</feature>
<feature type="region of interest" description="MFD domain">
    <location>
        <begin position="251"/>
        <end position="322"/>
    </location>
</feature>
<feature type="region of interest" description="Necessary for nuclear localization">
    <location>
        <begin position="339"/>
        <end position="401"/>
    </location>
</feature>
<feature type="region of interest" description="Necessary for interaction with CREBBP and for the recruitment of CREBBP to the nuclear bodies" evidence="4">
    <location>
        <begin position="392"/>
        <end position="401"/>
    </location>
</feature>
<feature type="short sequence motif" description="SH2-binding" evidence="2">
    <location>
        <begin position="50"/>
        <end position="53"/>
    </location>
</feature>
<feature type="short sequence motif" description="SH2-binding" evidence="2">
    <location>
        <begin position="358"/>
        <end position="361"/>
    </location>
</feature>
<feature type="short sequence motif" description="SH3-binding" evidence="2">
    <location>
        <begin position="376"/>
        <end position="384"/>
    </location>
</feature>
<feature type="short sequence motif" description="SH2-binding" evidence="2">
    <location>
        <begin position="396"/>
        <end position="399"/>
    </location>
</feature>
<feature type="compositionally biased region" description="Low complexity" evidence="3">
    <location>
        <begin position="85"/>
        <end position="106"/>
    </location>
</feature>
<feature type="compositionally biased region" description="Polar residues" evidence="3">
    <location>
        <begin position="128"/>
        <end position="137"/>
    </location>
</feature>
<feature type="compositionally biased region" description="Low complexity" evidence="3">
    <location>
        <begin position="138"/>
        <end position="149"/>
    </location>
</feature>
<feature type="compositionally biased region" description="Polar residues" evidence="3">
    <location>
        <begin position="260"/>
        <end position="276"/>
    </location>
</feature>
<feature type="compositionally biased region" description="Polar residues" evidence="3">
    <location>
        <begin position="285"/>
        <end position="294"/>
    </location>
</feature>
<feature type="compositionally biased region" description="Basic and acidic residues" evidence="3">
    <location>
        <begin position="295"/>
        <end position="304"/>
    </location>
</feature>
<feature type="compositionally biased region" description="Low complexity" evidence="3">
    <location>
        <begin position="310"/>
        <end position="374"/>
    </location>
</feature>
<feature type="compositionally biased region" description="Polar residues" evidence="3">
    <location>
        <begin position="375"/>
        <end position="387"/>
    </location>
</feature>
<feature type="compositionally biased region" description="Low complexity" evidence="3">
    <location>
        <begin position="389"/>
        <end position="401"/>
    </location>
</feature>
<keyword id="KW-0010">Activator</keyword>
<keyword id="KW-0106">Calcium</keyword>
<keyword id="KW-0137">Centromere</keyword>
<keyword id="KW-0156">Chromatin regulator</keyword>
<keyword id="KW-0158">Chromosome</keyword>
<keyword id="KW-0995">Kinetochore</keyword>
<keyword id="KW-0539">Nucleus</keyword>
<keyword id="KW-1185">Reference proteome</keyword>
<keyword id="KW-0677">Repeat</keyword>
<keyword id="KW-0804">Transcription</keyword>
<keyword id="KW-0805">Transcription regulation</keyword>